<accession>Q2NIW3</accession>
<protein>
    <recommendedName>
        <fullName evidence="1">Small ribosomal subunit protein uS17</fullName>
    </recommendedName>
    <alternativeName>
        <fullName evidence="2">30S ribosomal protein S17</fullName>
    </alternativeName>
</protein>
<name>RS17_AYWBP</name>
<organism>
    <name type="scientific">Aster yellows witches'-broom phytoplasma (strain AYWB)</name>
    <dbReference type="NCBI Taxonomy" id="322098"/>
    <lineage>
        <taxon>Bacteria</taxon>
        <taxon>Bacillati</taxon>
        <taxon>Mycoplasmatota</taxon>
        <taxon>Mollicutes</taxon>
        <taxon>Acholeplasmatales</taxon>
        <taxon>Acholeplasmataceae</taxon>
        <taxon>Candidatus Phytoplasma</taxon>
        <taxon>16SrI (Aster yellows group)</taxon>
    </lineage>
</organism>
<dbReference type="EMBL" id="CP000061">
    <property type="protein sequence ID" value="ABC65630.1"/>
    <property type="molecule type" value="Genomic_DNA"/>
</dbReference>
<dbReference type="SMR" id="Q2NIW3"/>
<dbReference type="STRING" id="322098.AYWB_513"/>
<dbReference type="KEGG" id="ayw:AYWB_513"/>
<dbReference type="eggNOG" id="COG0186">
    <property type="taxonomic scope" value="Bacteria"/>
</dbReference>
<dbReference type="HOGENOM" id="CLU_073626_1_0_14"/>
<dbReference type="OrthoDB" id="9811714at2"/>
<dbReference type="PhylomeDB" id="Q2NIW3"/>
<dbReference type="Proteomes" id="UP000001934">
    <property type="component" value="Chromosome"/>
</dbReference>
<dbReference type="GO" id="GO:0022627">
    <property type="term" value="C:cytosolic small ribosomal subunit"/>
    <property type="evidence" value="ECO:0007669"/>
    <property type="project" value="TreeGrafter"/>
</dbReference>
<dbReference type="GO" id="GO:0019843">
    <property type="term" value="F:rRNA binding"/>
    <property type="evidence" value="ECO:0007669"/>
    <property type="project" value="UniProtKB-UniRule"/>
</dbReference>
<dbReference type="GO" id="GO:0003735">
    <property type="term" value="F:structural constituent of ribosome"/>
    <property type="evidence" value="ECO:0007669"/>
    <property type="project" value="InterPro"/>
</dbReference>
<dbReference type="GO" id="GO:0006412">
    <property type="term" value="P:translation"/>
    <property type="evidence" value="ECO:0007669"/>
    <property type="project" value="UniProtKB-UniRule"/>
</dbReference>
<dbReference type="CDD" id="cd00364">
    <property type="entry name" value="Ribosomal_uS17"/>
    <property type="match status" value="1"/>
</dbReference>
<dbReference type="Gene3D" id="2.40.50.140">
    <property type="entry name" value="Nucleic acid-binding proteins"/>
    <property type="match status" value="1"/>
</dbReference>
<dbReference type="HAMAP" id="MF_01345_B">
    <property type="entry name" value="Ribosomal_uS17_B"/>
    <property type="match status" value="1"/>
</dbReference>
<dbReference type="InterPro" id="IPR012340">
    <property type="entry name" value="NA-bd_OB-fold"/>
</dbReference>
<dbReference type="InterPro" id="IPR000266">
    <property type="entry name" value="Ribosomal_uS17"/>
</dbReference>
<dbReference type="InterPro" id="IPR019984">
    <property type="entry name" value="Ribosomal_uS17_bact/chlr"/>
</dbReference>
<dbReference type="NCBIfam" id="NF004123">
    <property type="entry name" value="PRK05610.1"/>
    <property type="match status" value="1"/>
</dbReference>
<dbReference type="NCBIfam" id="TIGR03635">
    <property type="entry name" value="uS17_bact"/>
    <property type="match status" value="1"/>
</dbReference>
<dbReference type="PANTHER" id="PTHR10744">
    <property type="entry name" value="40S RIBOSOMAL PROTEIN S11 FAMILY MEMBER"/>
    <property type="match status" value="1"/>
</dbReference>
<dbReference type="PANTHER" id="PTHR10744:SF1">
    <property type="entry name" value="SMALL RIBOSOMAL SUBUNIT PROTEIN US17M"/>
    <property type="match status" value="1"/>
</dbReference>
<dbReference type="Pfam" id="PF00366">
    <property type="entry name" value="Ribosomal_S17"/>
    <property type="match status" value="1"/>
</dbReference>
<dbReference type="PRINTS" id="PR00973">
    <property type="entry name" value="RIBOSOMALS17"/>
</dbReference>
<dbReference type="SUPFAM" id="SSF50249">
    <property type="entry name" value="Nucleic acid-binding proteins"/>
    <property type="match status" value="1"/>
</dbReference>
<evidence type="ECO:0000255" key="1">
    <source>
        <dbReference type="HAMAP-Rule" id="MF_01345"/>
    </source>
</evidence>
<evidence type="ECO:0000305" key="2"/>
<keyword id="KW-0687">Ribonucleoprotein</keyword>
<keyword id="KW-0689">Ribosomal protein</keyword>
<keyword id="KW-0694">RNA-binding</keyword>
<keyword id="KW-0699">rRNA-binding</keyword>
<gene>
    <name evidence="1" type="primary">rpsQ</name>
    <name type="ordered locus">AYWB_513</name>
</gene>
<sequence length="87" mass="10331">MQRNFRKTFVGKVVSDKMDKTITVIVDIYKKDPLYGKRVKQSKKFHVHDENQEAKPGDLVNFMETRPLSKTKRFRLFKILYHSKSAN</sequence>
<comment type="function">
    <text evidence="1">One of the primary rRNA binding proteins, it binds specifically to the 5'-end of 16S ribosomal RNA.</text>
</comment>
<comment type="subunit">
    <text evidence="1">Part of the 30S ribosomal subunit.</text>
</comment>
<comment type="similarity">
    <text evidence="1">Belongs to the universal ribosomal protein uS17 family.</text>
</comment>
<reference key="1">
    <citation type="journal article" date="2006" name="J. Bacteriol.">
        <title>Living with genome instability: the adaptation of phytoplasmas to diverse environments of their insect and plant hosts.</title>
        <authorList>
            <person name="Bai X."/>
            <person name="Zhang J."/>
            <person name="Ewing A."/>
            <person name="Miller S.A."/>
            <person name="Jancso Radek A."/>
            <person name="Shevchenko D.V."/>
            <person name="Tsukerman K."/>
            <person name="Walunas T."/>
            <person name="Lapidus A."/>
            <person name="Campbell J.W."/>
            <person name="Hogenhout S.A."/>
        </authorList>
    </citation>
    <scope>NUCLEOTIDE SEQUENCE [LARGE SCALE GENOMIC DNA]</scope>
    <source>
        <strain>AYWB</strain>
    </source>
</reference>
<feature type="chain" id="PRO_0000233416" description="Small ribosomal subunit protein uS17">
    <location>
        <begin position="1"/>
        <end position="87"/>
    </location>
</feature>
<proteinExistence type="inferred from homology"/>